<keyword id="KW-0963">Cytoplasm</keyword>
<keyword id="KW-0217">Developmental protein</keyword>
<keyword id="KW-0903">Direct protein sequencing</keyword>
<keyword id="KW-0539">Nucleus</keyword>
<keyword id="KW-0607">Phytochrome signaling pathway</keyword>
<keyword id="KW-0736">Signalosome</keyword>
<proteinExistence type="evidence at protein level"/>
<feature type="chain" id="PRO_0000194866" description="COP9 signalosome complex subunit 6a">
    <location>
        <begin position="1" status="less than"/>
        <end position="66" status="greater than"/>
    </location>
</feature>
<feature type="non-consecutive residues" evidence="2">
    <location>
        <begin position="35"/>
        <end position="36"/>
    </location>
</feature>
<feature type="non-consecutive residues" evidence="2">
    <location>
        <begin position="51"/>
        <end position="52"/>
    </location>
</feature>
<feature type="non-terminal residue">
    <location>
        <position position="1"/>
    </location>
</feature>
<feature type="non-terminal residue">
    <location>
        <position position="66"/>
    </location>
</feature>
<name>CSN6A_BRAOL</name>
<accession>P68356</accession>
<organism>
    <name type="scientific">Brassica oleracea</name>
    <name type="common">Wild cabbage</name>
    <dbReference type="NCBI Taxonomy" id="3712"/>
    <lineage>
        <taxon>Eukaryota</taxon>
        <taxon>Viridiplantae</taxon>
        <taxon>Streptophyta</taxon>
        <taxon>Embryophyta</taxon>
        <taxon>Tracheophyta</taxon>
        <taxon>Spermatophyta</taxon>
        <taxon>Magnoliopsida</taxon>
        <taxon>eudicotyledons</taxon>
        <taxon>Gunneridae</taxon>
        <taxon>Pentapetalae</taxon>
        <taxon>rosids</taxon>
        <taxon>malvids</taxon>
        <taxon>Brassicales</taxon>
        <taxon>Brassicaceae</taxon>
        <taxon>Brassiceae</taxon>
        <taxon>Brassica</taxon>
    </lineage>
</organism>
<comment type="function">
    <text evidence="1">Component of the COP9 signalosome complex (CSN), a complex involved in various cellular and developmental processes such as photomorphogenesis and auxin and jasmonate responses. The CSN complex is an essential regulator of the ubiquitin (Ubl) conjugation pathway by mediating the deneddylation of the cullin subunits of SCF-type E3 ligase complexes, leading to decrease the Ubl ligase activity of SCF. It is involved in repression of photomorphogenesis in darkness by regulating the activity of COP1-containing Ubl ligase complexes (By similarity).</text>
</comment>
<comment type="subunit">
    <text>Component of the CSN complex, probably composed of CSN1, CSN2, CSN3, CSN4, CSN5 (CSN5A or CSN5B), CSN6 (CSN6A or CSN6B), CSN7 and CSN8.</text>
</comment>
<comment type="subcellular location">
    <subcellularLocation>
        <location>Cytoplasm</location>
    </subcellularLocation>
    <subcellularLocation>
        <location>Nucleus</location>
    </subcellularLocation>
</comment>
<comment type="miscellaneous">
    <text>Although strongly related to metalloprotease proteins, it lacks the JAMM motif that probably constitutes the catalytic center. Its function as protease is therefore unsure.</text>
</comment>
<comment type="similarity">
    <text evidence="2">Belongs to the peptidase M67A family. CSN6 subfamily.</text>
</comment>
<gene>
    <name type="primary">CSN6A</name>
</gene>
<protein>
    <recommendedName>
        <fullName>COP9 signalosome complex subunit 6a</fullName>
        <shortName>Signalosome subunit 6a</shortName>
    </recommendedName>
</protein>
<evidence type="ECO:0000250" key="1"/>
<evidence type="ECO:0000305" key="2"/>
<dbReference type="SMR" id="P68356"/>
<dbReference type="GO" id="GO:0008180">
    <property type="term" value="C:COP9 signalosome"/>
    <property type="evidence" value="ECO:0007669"/>
    <property type="project" value="UniProtKB-KW"/>
</dbReference>
<dbReference type="GO" id="GO:0005737">
    <property type="term" value="C:cytoplasm"/>
    <property type="evidence" value="ECO:0007669"/>
    <property type="project" value="UniProtKB-SubCell"/>
</dbReference>
<dbReference type="GO" id="GO:0009585">
    <property type="term" value="P:red, far-red light phototransduction"/>
    <property type="evidence" value="ECO:0007669"/>
    <property type="project" value="UniProtKB-KW"/>
</dbReference>
<dbReference type="Gene3D" id="3.40.140.10">
    <property type="entry name" value="Cytidine Deaminase, domain 2"/>
    <property type="match status" value="1"/>
</dbReference>
<reference key="1">
    <citation type="journal article" date="2001" name="Plant Cell">
        <title>Molecular characterization of subunit 6 of the COP9 signalosome and its role in multifaceted developmental processes in Arabidopsis.</title>
        <authorList>
            <person name="Peng Z."/>
            <person name="Serino G."/>
            <person name="Deng X.-W."/>
        </authorList>
    </citation>
    <scope>PROTEIN SEQUENCE OF 1-35 AND 52-66</scope>
</reference>
<reference key="2">
    <citation type="journal article" date="1999" name="Plant Cell">
        <title>Arabidopsis cop8 and fus4 mutations define the same gene that encodes subunit 4 of the COP9 signalosome.</title>
        <authorList>
            <person name="Serino G."/>
            <person name="Tsuge T."/>
            <person name="Kwok S."/>
            <person name="Matsui M."/>
            <person name="Wei N."/>
            <person name="Deng X.-W."/>
        </authorList>
    </citation>
    <scope>PROTEIN SEQUENCE OF 36-51</scope>
    <scope>COMPONENT OF THE CSN COMPLEX WITH CSN1; CSN2; CSN3; CSN4; CSN5; CSN7 AND CSN8</scope>
</reference>
<sequence length="66" mass="7892">KGRTVEIFNSFELLLDPTTQTLDRSFLEKKQELYKKMLNSRIRVLHQYLAAKFNTAYERNTRRGGR</sequence>